<organism>
    <name type="scientific">Mycolicibacterium vanbaalenii (strain DSM 7251 / JCM 13017 / BCRC 16820 / KCTC 9966 / NRRL B-24157 / PYR-1)</name>
    <name type="common">Mycobacterium vanbaalenii</name>
    <dbReference type="NCBI Taxonomy" id="350058"/>
    <lineage>
        <taxon>Bacteria</taxon>
        <taxon>Bacillati</taxon>
        <taxon>Actinomycetota</taxon>
        <taxon>Actinomycetes</taxon>
        <taxon>Mycobacteriales</taxon>
        <taxon>Mycobacteriaceae</taxon>
        <taxon>Mycolicibacterium</taxon>
    </lineage>
</organism>
<feature type="chain" id="PRO_1000058861" description="Adenylate kinase">
    <location>
        <begin position="1"/>
        <end position="181"/>
    </location>
</feature>
<feature type="region of interest" description="NMP" evidence="1">
    <location>
        <begin position="30"/>
        <end position="59"/>
    </location>
</feature>
<feature type="region of interest" description="LID" evidence="1">
    <location>
        <begin position="126"/>
        <end position="132"/>
    </location>
</feature>
<feature type="binding site" evidence="1">
    <location>
        <begin position="10"/>
        <end position="15"/>
    </location>
    <ligand>
        <name>ATP</name>
        <dbReference type="ChEBI" id="CHEBI:30616"/>
    </ligand>
</feature>
<feature type="binding site" evidence="1">
    <location>
        <position position="31"/>
    </location>
    <ligand>
        <name>AMP</name>
        <dbReference type="ChEBI" id="CHEBI:456215"/>
    </ligand>
</feature>
<feature type="binding site" evidence="1">
    <location>
        <position position="36"/>
    </location>
    <ligand>
        <name>AMP</name>
        <dbReference type="ChEBI" id="CHEBI:456215"/>
    </ligand>
</feature>
<feature type="binding site" evidence="1">
    <location>
        <begin position="57"/>
        <end position="59"/>
    </location>
    <ligand>
        <name>AMP</name>
        <dbReference type="ChEBI" id="CHEBI:456215"/>
    </ligand>
</feature>
<feature type="binding site" evidence="1">
    <location>
        <begin position="85"/>
        <end position="88"/>
    </location>
    <ligand>
        <name>AMP</name>
        <dbReference type="ChEBI" id="CHEBI:456215"/>
    </ligand>
</feature>
<feature type="binding site" evidence="1">
    <location>
        <position position="92"/>
    </location>
    <ligand>
        <name>AMP</name>
        <dbReference type="ChEBI" id="CHEBI:456215"/>
    </ligand>
</feature>
<feature type="binding site" evidence="1">
    <location>
        <position position="127"/>
    </location>
    <ligand>
        <name>ATP</name>
        <dbReference type="ChEBI" id="CHEBI:30616"/>
    </ligand>
</feature>
<feature type="binding site" evidence="1">
    <location>
        <position position="129"/>
    </location>
    <ligand>
        <name>AMP</name>
        <dbReference type="ChEBI" id="CHEBI:456215"/>
    </ligand>
</feature>
<feature type="binding site" evidence="1">
    <location>
        <position position="140"/>
    </location>
    <ligand>
        <name>AMP</name>
        <dbReference type="ChEBI" id="CHEBI:456215"/>
    </ligand>
</feature>
<feature type="binding site" evidence="1">
    <location>
        <position position="166"/>
    </location>
    <ligand>
        <name>ATP</name>
        <dbReference type="ChEBI" id="CHEBI:30616"/>
    </ligand>
</feature>
<proteinExistence type="inferred from homology"/>
<reference key="1">
    <citation type="submission" date="2006-12" db="EMBL/GenBank/DDBJ databases">
        <title>Complete sequence of Mycobacterium vanbaalenii PYR-1.</title>
        <authorList>
            <consortium name="US DOE Joint Genome Institute"/>
            <person name="Copeland A."/>
            <person name="Lucas S."/>
            <person name="Lapidus A."/>
            <person name="Barry K."/>
            <person name="Detter J.C."/>
            <person name="Glavina del Rio T."/>
            <person name="Hammon N."/>
            <person name="Israni S."/>
            <person name="Dalin E."/>
            <person name="Tice H."/>
            <person name="Pitluck S."/>
            <person name="Singan V."/>
            <person name="Schmutz J."/>
            <person name="Larimer F."/>
            <person name="Land M."/>
            <person name="Hauser L."/>
            <person name="Kyrpides N."/>
            <person name="Anderson I.J."/>
            <person name="Miller C."/>
            <person name="Richardson P."/>
        </authorList>
    </citation>
    <scope>NUCLEOTIDE SEQUENCE [LARGE SCALE GENOMIC DNA]</scope>
    <source>
        <strain>DSM 7251 / JCM 13017 / BCRC 16820 / KCTC 9966 / NRRL B-24157 / PYR-1</strain>
    </source>
</reference>
<evidence type="ECO:0000255" key="1">
    <source>
        <dbReference type="HAMAP-Rule" id="MF_00235"/>
    </source>
</evidence>
<protein>
    <recommendedName>
        <fullName evidence="1">Adenylate kinase</fullName>
        <shortName evidence="1">AK</shortName>
        <ecNumber evidence="1">2.7.4.3</ecNumber>
    </recommendedName>
    <alternativeName>
        <fullName evidence="1">ATP-AMP transphosphorylase</fullName>
    </alternativeName>
    <alternativeName>
        <fullName evidence="1">ATP:AMP phosphotransferase</fullName>
    </alternativeName>
    <alternativeName>
        <fullName evidence="1">Adenylate monophosphate kinase</fullName>
    </alternativeName>
</protein>
<name>KAD_MYCVP</name>
<sequence>MRIVLLGPPGAGKGTQAQKLAEKLGIPQISTGDLFRYNISNGTELGLEAKKYLDAGDLVPATLTNALVDDRLDDEDAAAGFILDGYPRSVEQAKALDEMLKKRDLSLDAVLEFRVPEEELVSRLKGRGRDDDTEDVIRNRFRVYRDETAPLLDYYSADLKTVDAVGELDEVFARALKALGR</sequence>
<dbReference type="EC" id="2.7.4.3" evidence="1"/>
<dbReference type="EMBL" id="CP000511">
    <property type="protein sequence ID" value="ABM12182.1"/>
    <property type="molecule type" value="Genomic_DNA"/>
</dbReference>
<dbReference type="RefSeq" id="WP_011778611.1">
    <property type="nucleotide sequence ID" value="NZ_JACKSD010000069.1"/>
</dbReference>
<dbReference type="SMR" id="A1T4T2"/>
<dbReference type="STRING" id="350058.Mvan_1348"/>
<dbReference type="KEGG" id="mva:Mvan_1348"/>
<dbReference type="eggNOG" id="COG0563">
    <property type="taxonomic scope" value="Bacteria"/>
</dbReference>
<dbReference type="HOGENOM" id="CLU_032354_4_1_11"/>
<dbReference type="UniPathway" id="UPA00588">
    <property type="reaction ID" value="UER00649"/>
</dbReference>
<dbReference type="Proteomes" id="UP000009159">
    <property type="component" value="Chromosome"/>
</dbReference>
<dbReference type="GO" id="GO:0005737">
    <property type="term" value="C:cytoplasm"/>
    <property type="evidence" value="ECO:0007669"/>
    <property type="project" value="UniProtKB-SubCell"/>
</dbReference>
<dbReference type="GO" id="GO:0004017">
    <property type="term" value="F:adenylate kinase activity"/>
    <property type="evidence" value="ECO:0007669"/>
    <property type="project" value="UniProtKB-UniRule"/>
</dbReference>
<dbReference type="GO" id="GO:0005524">
    <property type="term" value="F:ATP binding"/>
    <property type="evidence" value="ECO:0007669"/>
    <property type="project" value="UniProtKB-UniRule"/>
</dbReference>
<dbReference type="GO" id="GO:0044209">
    <property type="term" value="P:AMP salvage"/>
    <property type="evidence" value="ECO:0007669"/>
    <property type="project" value="UniProtKB-UniRule"/>
</dbReference>
<dbReference type="CDD" id="cd01428">
    <property type="entry name" value="ADK"/>
    <property type="match status" value="1"/>
</dbReference>
<dbReference type="Gene3D" id="3.40.50.300">
    <property type="entry name" value="P-loop containing nucleotide triphosphate hydrolases"/>
    <property type="match status" value="1"/>
</dbReference>
<dbReference type="HAMAP" id="MF_00235">
    <property type="entry name" value="Adenylate_kinase_Adk"/>
    <property type="match status" value="1"/>
</dbReference>
<dbReference type="InterPro" id="IPR006259">
    <property type="entry name" value="Adenyl_kin_sub"/>
</dbReference>
<dbReference type="InterPro" id="IPR000850">
    <property type="entry name" value="Adenylat/UMP-CMP_kin"/>
</dbReference>
<dbReference type="InterPro" id="IPR033690">
    <property type="entry name" value="Adenylat_kinase_CS"/>
</dbReference>
<dbReference type="InterPro" id="IPR027417">
    <property type="entry name" value="P-loop_NTPase"/>
</dbReference>
<dbReference type="NCBIfam" id="TIGR01351">
    <property type="entry name" value="adk"/>
    <property type="match status" value="1"/>
</dbReference>
<dbReference type="NCBIfam" id="NF001381">
    <property type="entry name" value="PRK00279.1-3"/>
    <property type="match status" value="1"/>
</dbReference>
<dbReference type="NCBIfam" id="NF011100">
    <property type="entry name" value="PRK14527.1"/>
    <property type="match status" value="1"/>
</dbReference>
<dbReference type="NCBIfam" id="NF011101">
    <property type="entry name" value="PRK14528.1"/>
    <property type="match status" value="1"/>
</dbReference>
<dbReference type="NCBIfam" id="NF011104">
    <property type="entry name" value="PRK14531.1"/>
    <property type="match status" value="1"/>
</dbReference>
<dbReference type="NCBIfam" id="NF011105">
    <property type="entry name" value="PRK14532.1"/>
    <property type="match status" value="1"/>
</dbReference>
<dbReference type="PANTHER" id="PTHR23359">
    <property type="entry name" value="NUCLEOTIDE KINASE"/>
    <property type="match status" value="1"/>
</dbReference>
<dbReference type="Pfam" id="PF00406">
    <property type="entry name" value="ADK"/>
    <property type="match status" value="1"/>
</dbReference>
<dbReference type="PRINTS" id="PR00094">
    <property type="entry name" value="ADENYLTKNASE"/>
</dbReference>
<dbReference type="SUPFAM" id="SSF52540">
    <property type="entry name" value="P-loop containing nucleoside triphosphate hydrolases"/>
    <property type="match status" value="1"/>
</dbReference>
<dbReference type="PROSITE" id="PS00113">
    <property type="entry name" value="ADENYLATE_KINASE"/>
    <property type="match status" value="1"/>
</dbReference>
<comment type="function">
    <text evidence="1">Catalyzes the reversible transfer of the terminal phosphate group between ATP and AMP. Plays an important role in cellular energy homeostasis and in adenine nucleotide metabolism.</text>
</comment>
<comment type="catalytic activity">
    <reaction evidence="1">
        <text>AMP + ATP = 2 ADP</text>
        <dbReference type="Rhea" id="RHEA:12973"/>
        <dbReference type="ChEBI" id="CHEBI:30616"/>
        <dbReference type="ChEBI" id="CHEBI:456215"/>
        <dbReference type="ChEBI" id="CHEBI:456216"/>
        <dbReference type="EC" id="2.7.4.3"/>
    </reaction>
</comment>
<comment type="pathway">
    <text evidence="1">Purine metabolism; AMP biosynthesis via salvage pathway; AMP from ADP: step 1/1.</text>
</comment>
<comment type="subunit">
    <text evidence="1">Monomer.</text>
</comment>
<comment type="subcellular location">
    <subcellularLocation>
        <location evidence="1">Cytoplasm</location>
    </subcellularLocation>
</comment>
<comment type="domain">
    <text evidence="1">Consists of three domains, a large central CORE domain and two small peripheral domains, NMPbind and LID, which undergo movements during catalysis. The LID domain closes over the site of phosphoryl transfer upon ATP binding. Assembling and dissambling the active center during each catalytic cycle provides an effective means to prevent ATP hydrolysis.</text>
</comment>
<comment type="similarity">
    <text evidence="1">Belongs to the adenylate kinase family.</text>
</comment>
<gene>
    <name evidence="1" type="primary">adk</name>
    <name type="ordered locus">Mvan_1348</name>
</gene>
<accession>A1T4T2</accession>
<keyword id="KW-0067">ATP-binding</keyword>
<keyword id="KW-0963">Cytoplasm</keyword>
<keyword id="KW-0418">Kinase</keyword>
<keyword id="KW-0545">Nucleotide biosynthesis</keyword>
<keyword id="KW-0547">Nucleotide-binding</keyword>
<keyword id="KW-0808">Transferase</keyword>